<keyword id="KW-0963">Cytoplasm</keyword>
<keyword id="KW-0319">Glycerol metabolism</keyword>
<keyword id="KW-0418">Kinase</keyword>
<keyword id="KW-0808">Transferase</keyword>
<sequence length="331" mass="35702">MRRLVNDGYEAVEEMLAGYVAAQGKYVDFAENDKRVIVSKQMSEEPRVRIIVGGGSGHEPLFLGYVGKDFADAAVVGNINTSPSPEPCYNAVKAVDSGKGCLYMYGNYAGDVMNFDMGAEMAADDGIRVETVLVTDDIYSAENVEDRRGVAGDLIVFKAAASAAAKGLDLDAVKQAAEKANANTFSMGVALSSSTLPVTGKAIFEMKEGEMEVGMGIHGEPGIKRTSIEPADKVVDQIMGYLIEEMKLTAGEEVHVLINGLGGLPVMDQYICYRRVDEILKEKGVHIHSPLVGNYATSMDMIGMSITLVRLDDELKDLLDTPCDTPYFKVD</sequence>
<accession>Q92EU2</accession>
<protein>
    <recommendedName>
        <fullName evidence="7">PTS-dependent dihydroxyacetone kinase 2, dihydroxyacetone-binding subunit DhaK</fullName>
        <ecNumber evidence="7">2.7.1.121</ecNumber>
    </recommendedName>
</protein>
<name>DHAK2_LISIN</name>
<dbReference type="EC" id="2.7.1.121" evidence="7"/>
<dbReference type="EMBL" id="AL596164">
    <property type="protein sequence ID" value="CAC95599.1"/>
    <property type="molecule type" value="Genomic_DNA"/>
</dbReference>
<dbReference type="PIR" id="AG1478">
    <property type="entry name" value="AG1478"/>
</dbReference>
<dbReference type="SMR" id="Q92EU2"/>
<dbReference type="STRING" id="272626.gene:17564693"/>
<dbReference type="KEGG" id="lin:lin0366"/>
<dbReference type="eggNOG" id="COG2376">
    <property type="taxonomic scope" value="Bacteria"/>
</dbReference>
<dbReference type="HOGENOM" id="CLU_017054_0_0_9"/>
<dbReference type="OrthoDB" id="9806345at2"/>
<dbReference type="UniPathway" id="UPA00616"/>
<dbReference type="Proteomes" id="UP000002513">
    <property type="component" value="Chromosome"/>
</dbReference>
<dbReference type="GO" id="GO:0005829">
    <property type="term" value="C:cytosol"/>
    <property type="evidence" value="ECO:0007669"/>
    <property type="project" value="TreeGrafter"/>
</dbReference>
<dbReference type="GO" id="GO:0004371">
    <property type="term" value="F:glycerone kinase activity"/>
    <property type="evidence" value="ECO:0007669"/>
    <property type="project" value="InterPro"/>
</dbReference>
<dbReference type="GO" id="GO:0047324">
    <property type="term" value="F:phosphoenolpyruvate-glycerone phosphotransferase activity"/>
    <property type="evidence" value="ECO:0000314"/>
    <property type="project" value="UniProtKB"/>
</dbReference>
<dbReference type="GO" id="GO:0019563">
    <property type="term" value="P:glycerol catabolic process"/>
    <property type="evidence" value="ECO:0007669"/>
    <property type="project" value="UniProtKB-UniPathway"/>
</dbReference>
<dbReference type="FunFam" id="3.30.1180.20:FF:000002">
    <property type="entry name" value="Dihydroxyacetone kinase subunit DhaK"/>
    <property type="match status" value="1"/>
</dbReference>
<dbReference type="FunFam" id="3.40.50.10440:FF:000001">
    <property type="entry name" value="Dihydroxyacetone kinase, DhaK subunit"/>
    <property type="match status" value="1"/>
</dbReference>
<dbReference type="Gene3D" id="3.40.50.10440">
    <property type="entry name" value="Dihydroxyacetone kinase, domain 1"/>
    <property type="match status" value="1"/>
</dbReference>
<dbReference type="Gene3D" id="3.30.1180.20">
    <property type="entry name" value="Dihydroxyacetone kinase, domain 2"/>
    <property type="match status" value="1"/>
</dbReference>
<dbReference type="InterPro" id="IPR004006">
    <property type="entry name" value="DhaK_dom"/>
</dbReference>
<dbReference type="InterPro" id="IPR050861">
    <property type="entry name" value="Dihydroxyacetone_Kinase"/>
</dbReference>
<dbReference type="PANTHER" id="PTHR28629">
    <property type="entry name" value="TRIOKINASE/FMN CYCLASE"/>
    <property type="match status" value="1"/>
</dbReference>
<dbReference type="PANTHER" id="PTHR28629:SF4">
    <property type="entry name" value="TRIOKINASE_FMN CYCLASE"/>
    <property type="match status" value="1"/>
</dbReference>
<dbReference type="Pfam" id="PF02733">
    <property type="entry name" value="Dak1"/>
    <property type="match status" value="1"/>
</dbReference>
<dbReference type="SUPFAM" id="SSF82549">
    <property type="entry name" value="DAK1/DegV-like"/>
    <property type="match status" value="1"/>
</dbReference>
<dbReference type="PROSITE" id="PS51481">
    <property type="entry name" value="DHAK"/>
    <property type="match status" value="1"/>
</dbReference>
<reference key="1">
    <citation type="journal article" date="2001" name="Science">
        <title>Comparative genomics of Listeria species.</title>
        <authorList>
            <person name="Glaser P."/>
            <person name="Frangeul L."/>
            <person name="Buchrieser C."/>
            <person name="Rusniok C."/>
            <person name="Amend A."/>
            <person name="Baquero F."/>
            <person name="Berche P."/>
            <person name="Bloecker H."/>
            <person name="Brandt P."/>
            <person name="Chakraborty T."/>
            <person name="Charbit A."/>
            <person name="Chetouani F."/>
            <person name="Couve E."/>
            <person name="de Daruvar A."/>
            <person name="Dehoux P."/>
            <person name="Domann E."/>
            <person name="Dominguez-Bernal G."/>
            <person name="Duchaud E."/>
            <person name="Durant L."/>
            <person name="Dussurget O."/>
            <person name="Entian K.-D."/>
            <person name="Fsihi H."/>
            <person name="Garcia-del Portillo F."/>
            <person name="Garrido P."/>
            <person name="Gautier L."/>
            <person name="Goebel W."/>
            <person name="Gomez-Lopez N."/>
            <person name="Hain T."/>
            <person name="Hauf J."/>
            <person name="Jackson D."/>
            <person name="Jones L.-M."/>
            <person name="Kaerst U."/>
            <person name="Kreft J."/>
            <person name="Kuhn M."/>
            <person name="Kunst F."/>
            <person name="Kurapkat G."/>
            <person name="Madueno E."/>
            <person name="Maitournam A."/>
            <person name="Mata Vicente J."/>
            <person name="Ng E."/>
            <person name="Nedjari H."/>
            <person name="Nordsiek G."/>
            <person name="Novella S."/>
            <person name="de Pablos B."/>
            <person name="Perez-Diaz J.-C."/>
            <person name="Purcell R."/>
            <person name="Remmel B."/>
            <person name="Rose M."/>
            <person name="Schlueter T."/>
            <person name="Simoes N."/>
            <person name="Tierrez A."/>
            <person name="Vazquez-Boland J.-A."/>
            <person name="Voss H."/>
            <person name="Wehland J."/>
            <person name="Cossart P."/>
        </authorList>
    </citation>
    <scope>NUCLEOTIDE SEQUENCE [LARGE SCALE GENOMIC DNA]</scope>
    <source>
        <strain>ATCC BAA-680 / CLIP 11262</strain>
    </source>
</reference>
<reference key="2">
    <citation type="journal article" date="2012" name="J. Bacteriol.">
        <title>Novel listerial glycerol dehydrogenase- and phosphoenolpyruvate-dependent dihydroxyacetone kinase system connected to the pentose phosphate pathway.</title>
        <authorList>
            <person name="Monniot C."/>
            <person name="Zebre A.C."/>
            <person name="Ake F.M."/>
            <person name="Deutscher J."/>
            <person name="Milohanic E."/>
        </authorList>
    </citation>
    <scope>FUNCTION</scope>
    <scope>CATALYTIC ACTIVITY</scope>
    <scope>INDUCTION</scope>
    <scope>SUBCELLULAR LOCATION</scope>
    <source>
        <strain>ATCC BAA-680 / CLIP 11262</strain>
    </source>
</reference>
<gene>
    <name evidence="5" type="primary">dhaK-2</name>
    <name evidence="8" type="ordered locus">lin0366</name>
</gene>
<proteinExistence type="evidence at protein level"/>
<comment type="function">
    <text evidence="7">Dihydroxyacetone binding subunit of the dihydroxyacetone kinase, which is responsible for the phosphoenolpyruvate (PEP)-dependent phosphorylation of dihydroxyacetone via a phosphoryl group transfer from DhaL-ATP.</text>
</comment>
<comment type="catalytic activity">
    <reaction evidence="7">
        <text>dihydroxyacetone + phosphoenolpyruvate = dihydroxyacetone phosphate + pyruvate</text>
        <dbReference type="Rhea" id="RHEA:18381"/>
        <dbReference type="ChEBI" id="CHEBI:15361"/>
        <dbReference type="ChEBI" id="CHEBI:16016"/>
        <dbReference type="ChEBI" id="CHEBI:57642"/>
        <dbReference type="ChEBI" id="CHEBI:58702"/>
        <dbReference type="EC" id="2.7.1.121"/>
    </reaction>
</comment>
<comment type="pathway">
    <text evidence="6">Polyol metabolism; glycerol degradation.</text>
</comment>
<comment type="subunit">
    <text evidence="2">Homodimer. The dihydroxyacetone kinase complex is composed of a homodimer of DhaM, a homodimer of DhaK and the subunit DhaL.</text>
</comment>
<comment type="subcellular location">
    <subcellularLocation>
        <location evidence="7">Cytoplasm</location>
    </subcellularLocation>
</comment>
<comment type="induction">
    <text evidence="4">Repressed by GolR.</text>
</comment>
<comment type="miscellaneous">
    <text evidence="7">Unlike the carbohydrate-specific transporters of the PTS, the complex DhaKML has no transport activity.</text>
</comment>
<feature type="chain" id="PRO_0000439399" description="PTS-dependent dihydroxyacetone kinase 2, dihydroxyacetone-binding subunit DhaK">
    <location>
        <begin position="1"/>
        <end position="331"/>
    </location>
</feature>
<feature type="domain" description="DhaK" evidence="3">
    <location>
        <begin position="7"/>
        <end position="328"/>
    </location>
</feature>
<feature type="active site" description="Proton acceptor" evidence="1">
    <location>
        <position position="58"/>
    </location>
</feature>
<feature type="active site" description="Tele-hemiaminal-histidine intermediate" evidence="3">
    <location>
        <position position="218"/>
    </location>
</feature>
<feature type="binding site" evidence="2 3">
    <location>
        <begin position="55"/>
        <end position="58"/>
    </location>
    <ligand>
        <name>dihydroxyacetone</name>
        <dbReference type="ChEBI" id="CHEBI:16016"/>
    </ligand>
</feature>
<feature type="binding site" evidence="2 3">
    <location>
        <position position="111"/>
    </location>
    <ligand>
        <name>dihydroxyacetone</name>
        <dbReference type="ChEBI" id="CHEBI:16016"/>
    </ligand>
</feature>
<evidence type="ECO:0000250" key="1">
    <source>
        <dbReference type="UniProtKB" id="P76015"/>
    </source>
</evidence>
<evidence type="ECO:0000250" key="2">
    <source>
        <dbReference type="UniProtKB" id="Q9CIV8"/>
    </source>
</evidence>
<evidence type="ECO:0000255" key="3">
    <source>
        <dbReference type="PROSITE-ProRule" id="PRU00814"/>
    </source>
</evidence>
<evidence type="ECO:0000269" key="4">
    <source>
    </source>
</evidence>
<evidence type="ECO:0000303" key="5">
    <source>
    </source>
</evidence>
<evidence type="ECO:0000305" key="6"/>
<evidence type="ECO:0000305" key="7">
    <source>
    </source>
</evidence>
<evidence type="ECO:0000312" key="8">
    <source>
        <dbReference type="EMBL" id="CAC95599.1"/>
    </source>
</evidence>
<evidence type="ECO:0000312" key="9">
    <source>
        <dbReference type="Proteomes" id="UP000002513"/>
    </source>
</evidence>
<organism evidence="9">
    <name type="scientific">Listeria innocua serovar 6a (strain ATCC BAA-680 / CLIP 11262)</name>
    <dbReference type="NCBI Taxonomy" id="272626"/>
    <lineage>
        <taxon>Bacteria</taxon>
        <taxon>Bacillati</taxon>
        <taxon>Bacillota</taxon>
        <taxon>Bacilli</taxon>
        <taxon>Bacillales</taxon>
        <taxon>Listeriaceae</taxon>
        <taxon>Listeria</taxon>
    </lineage>
</organism>